<accession>P15762</accession>
<sequence>MTRSLKKNPFVAKHLLRKIEKLNTKAEKQIIITWSRAITGERRELNPRW</sequence>
<reference key="1">
    <citation type="journal article" date="1990" name="Nucleic Acids Res.">
        <title>Nucleotide sequence of the mustard chloroplast genes trnH and rps19'.</title>
        <authorList>
            <person name="Nickelsen J."/>
            <person name="Link G."/>
        </authorList>
    </citation>
    <scope>NUCLEOTIDE SEQUENCE [GENOMIC DNA]</scope>
    <source>
        <strain>cv. Albatros</strain>
    </source>
</reference>
<dbReference type="EMBL" id="X17331">
    <property type="protein sequence ID" value="CAC35517.1"/>
    <property type="molecule type" value="Genomic_DNA"/>
</dbReference>
<dbReference type="SMR" id="P15762"/>
<dbReference type="GO" id="GO:0009507">
    <property type="term" value="C:chloroplast"/>
    <property type="evidence" value="ECO:0007669"/>
    <property type="project" value="UniProtKB-SubCell"/>
</dbReference>
<dbReference type="GO" id="GO:1990904">
    <property type="term" value="C:ribonucleoprotein complex"/>
    <property type="evidence" value="ECO:0007669"/>
    <property type="project" value="UniProtKB-KW"/>
</dbReference>
<dbReference type="GO" id="GO:0005840">
    <property type="term" value="C:ribosome"/>
    <property type="evidence" value="ECO:0007669"/>
    <property type="project" value="UniProtKB-KW"/>
</dbReference>
<dbReference type="GO" id="GO:0019843">
    <property type="term" value="F:rRNA binding"/>
    <property type="evidence" value="ECO:0007669"/>
    <property type="project" value="UniProtKB-KW"/>
</dbReference>
<dbReference type="GO" id="GO:0003735">
    <property type="term" value="F:structural constituent of ribosome"/>
    <property type="evidence" value="ECO:0007669"/>
    <property type="project" value="InterPro"/>
</dbReference>
<dbReference type="GO" id="GO:0006412">
    <property type="term" value="P:translation"/>
    <property type="evidence" value="ECO:0007669"/>
    <property type="project" value="InterPro"/>
</dbReference>
<dbReference type="Gene3D" id="3.30.860.10">
    <property type="entry name" value="30s Ribosomal Protein S19, Chain A"/>
    <property type="match status" value="1"/>
</dbReference>
<dbReference type="InterPro" id="IPR002222">
    <property type="entry name" value="Ribosomal_uS19"/>
</dbReference>
<dbReference type="InterPro" id="IPR023575">
    <property type="entry name" value="Ribosomal_uS19_SF"/>
</dbReference>
<dbReference type="Pfam" id="PF00203">
    <property type="entry name" value="Ribosomal_S19"/>
    <property type="match status" value="1"/>
</dbReference>
<dbReference type="SUPFAM" id="SSF54570">
    <property type="entry name" value="Ribosomal protein S19"/>
    <property type="match status" value="1"/>
</dbReference>
<geneLocation type="chloroplast"/>
<feature type="chain" id="PRO_0000129991" description="Small ribosomal subunit protein uS19c">
    <location>
        <begin position="1"/>
        <end position="49" status="greater than"/>
    </location>
</feature>
<feature type="non-terminal residue">
    <location>
        <position position="49"/>
    </location>
</feature>
<protein>
    <recommendedName>
        <fullName evidence="2">Small ribosomal subunit protein uS19c</fullName>
    </recommendedName>
    <alternativeName>
        <fullName>30S ribosomal protein S19, chloroplastic</fullName>
    </alternativeName>
</protein>
<keyword id="KW-0150">Chloroplast</keyword>
<keyword id="KW-0934">Plastid</keyword>
<keyword id="KW-0687">Ribonucleoprotein</keyword>
<keyword id="KW-0689">Ribosomal protein</keyword>
<keyword id="KW-0694">RNA-binding</keyword>
<keyword id="KW-0699">rRNA-binding</keyword>
<name>RR19_SINAL</name>
<comment type="function">
    <text evidence="1">Protein S19 forms a complex with S13 that binds strongly to the 16S ribosomal RNA.</text>
</comment>
<comment type="subcellular location">
    <subcellularLocation>
        <location>Plastid</location>
        <location>Chloroplast</location>
    </subcellularLocation>
</comment>
<comment type="similarity">
    <text evidence="2">Belongs to the universal ribosomal protein uS19 family.</text>
</comment>
<evidence type="ECO:0000250" key="1"/>
<evidence type="ECO:0000305" key="2"/>
<organism>
    <name type="scientific">Sinapis alba</name>
    <name type="common">White mustard</name>
    <name type="synonym">Brassica hirta</name>
    <dbReference type="NCBI Taxonomy" id="3728"/>
    <lineage>
        <taxon>Eukaryota</taxon>
        <taxon>Viridiplantae</taxon>
        <taxon>Streptophyta</taxon>
        <taxon>Embryophyta</taxon>
        <taxon>Tracheophyta</taxon>
        <taxon>Spermatophyta</taxon>
        <taxon>Magnoliopsida</taxon>
        <taxon>eudicotyledons</taxon>
        <taxon>Gunneridae</taxon>
        <taxon>Pentapetalae</taxon>
        <taxon>rosids</taxon>
        <taxon>malvids</taxon>
        <taxon>Brassicales</taxon>
        <taxon>Brassicaceae</taxon>
        <taxon>Brassiceae</taxon>
        <taxon>Sinapis</taxon>
    </lineage>
</organism>
<proteinExistence type="inferred from homology"/>
<gene>
    <name type="primary">rps19</name>
</gene>